<comment type="function">
    <text evidence="1">One of the primary rRNA binding proteins, this protein initially binds near the 5'-end of the 23S rRNA. It is important during the early stages of 50S assembly. It makes multiple contacts with different domains of the 23S rRNA in the assembled 50S subunit and ribosome.</text>
</comment>
<comment type="function">
    <text evidence="1">Forms part of the polypeptide exit tunnel.</text>
</comment>
<comment type="subunit">
    <text evidence="1">Part of the 50S ribosomal subunit.</text>
</comment>
<comment type="similarity">
    <text evidence="1">Belongs to the universal ribosomal protein uL4 family.</text>
</comment>
<name>RL4_AFIC5</name>
<protein>
    <recommendedName>
        <fullName evidence="1">Large ribosomal subunit protein uL4</fullName>
    </recommendedName>
    <alternativeName>
        <fullName evidence="2">50S ribosomal protein L4</fullName>
    </alternativeName>
</protein>
<organism>
    <name type="scientific">Afipia carboxidovorans (strain ATCC 49405 / DSM 1227 / KCTC 32145 / OM5)</name>
    <name type="common">Oligotropha carboxidovorans</name>
    <dbReference type="NCBI Taxonomy" id="504832"/>
    <lineage>
        <taxon>Bacteria</taxon>
        <taxon>Pseudomonadati</taxon>
        <taxon>Pseudomonadota</taxon>
        <taxon>Alphaproteobacteria</taxon>
        <taxon>Hyphomicrobiales</taxon>
        <taxon>Nitrobacteraceae</taxon>
        <taxon>Afipia</taxon>
    </lineage>
</organism>
<accession>B6JET4</accession>
<accession>F8BZC6</accession>
<gene>
    <name evidence="1" type="primary">rplD</name>
    <name type="ordered locus">OCAR_5678</name>
    <name type="ordered locus">OCA5_c23290</name>
</gene>
<sequence>MELNVTTLEGKAAGSVNLSDTIFGLEPRTDIIQRVVNWQLAKRQAGTHKTKGRAEIARTGKKMYKQKGTGGARHGSARVPQFRGGGRAFGPVVRSHAYDLPKKVRALGLRHALSAKAKDGSLVVLDNAELKDAKTKALIGHFSGLGLTSALIVDGAEVNNGFAQAARNIPHIDVLPIQGINVYDILRRQKLVLTKAAVDALEARFK</sequence>
<proteinExistence type="inferred from homology"/>
<keyword id="KW-1185">Reference proteome</keyword>
<keyword id="KW-0687">Ribonucleoprotein</keyword>
<keyword id="KW-0689">Ribosomal protein</keyword>
<keyword id="KW-0694">RNA-binding</keyword>
<keyword id="KW-0699">rRNA-binding</keyword>
<evidence type="ECO:0000255" key="1">
    <source>
        <dbReference type="HAMAP-Rule" id="MF_01328"/>
    </source>
</evidence>
<evidence type="ECO:0000305" key="2"/>
<reference key="1">
    <citation type="journal article" date="2008" name="J. Bacteriol.">
        <title>Genome sequence of the chemolithoautotrophic bacterium Oligotropha carboxidovorans OM5T.</title>
        <authorList>
            <person name="Paul D."/>
            <person name="Bridges S."/>
            <person name="Burgess S.C."/>
            <person name="Dandass Y."/>
            <person name="Lawrence M.L."/>
        </authorList>
    </citation>
    <scope>NUCLEOTIDE SEQUENCE [LARGE SCALE GENOMIC DNA]</scope>
    <source>
        <strain>ATCC 49405 / DSM 1227 / KCTC 32145 / OM5</strain>
    </source>
</reference>
<reference key="2">
    <citation type="journal article" date="2011" name="J. Bacteriol.">
        <title>Complete genome sequences of the chemolithoautotrophic Oligotropha carboxidovorans strains OM4 and OM5.</title>
        <authorList>
            <person name="Volland S."/>
            <person name="Rachinger M."/>
            <person name="Strittmatter A."/>
            <person name="Daniel R."/>
            <person name="Gottschalk G."/>
            <person name="Meyer O."/>
        </authorList>
    </citation>
    <scope>NUCLEOTIDE SEQUENCE [LARGE SCALE GENOMIC DNA]</scope>
    <source>
        <strain>ATCC 49405 / DSM 1227 / KCTC 32145 / OM5</strain>
    </source>
</reference>
<feature type="chain" id="PRO_1000142162" description="Large ribosomal subunit protein uL4">
    <location>
        <begin position="1"/>
        <end position="206"/>
    </location>
</feature>
<dbReference type="EMBL" id="CP001196">
    <property type="protein sequence ID" value="ACI92806.1"/>
    <property type="molecule type" value="Genomic_DNA"/>
</dbReference>
<dbReference type="EMBL" id="CP002826">
    <property type="protein sequence ID" value="AEI07029.1"/>
    <property type="molecule type" value="Genomic_DNA"/>
</dbReference>
<dbReference type="RefSeq" id="WP_012562835.1">
    <property type="nucleotide sequence ID" value="NC_015684.1"/>
</dbReference>
<dbReference type="SMR" id="B6JET4"/>
<dbReference type="STRING" id="504832.OCA5_c23290"/>
<dbReference type="KEGG" id="oca:OCAR_5678"/>
<dbReference type="KEGG" id="ocg:OCA5_c23290"/>
<dbReference type="PATRIC" id="fig|504832.7.peg.2454"/>
<dbReference type="eggNOG" id="COG0088">
    <property type="taxonomic scope" value="Bacteria"/>
</dbReference>
<dbReference type="HOGENOM" id="CLU_041575_5_1_5"/>
<dbReference type="OrthoDB" id="9803201at2"/>
<dbReference type="Proteomes" id="UP000007730">
    <property type="component" value="Chromosome"/>
</dbReference>
<dbReference type="GO" id="GO:1990904">
    <property type="term" value="C:ribonucleoprotein complex"/>
    <property type="evidence" value="ECO:0007669"/>
    <property type="project" value="UniProtKB-KW"/>
</dbReference>
<dbReference type="GO" id="GO:0005840">
    <property type="term" value="C:ribosome"/>
    <property type="evidence" value="ECO:0007669"/>
    <property type="project" value="UniProtKB-KW"/>
</dbReference>
<dbReference type="GO" id="GO:0019843">
    <property type="term" value="F:rRNA binding"/>
    <property type="evidence" value="ECO:0007669"/>
    <property type="project" value="UniProtKB-UniRule"/>
</dbReference>
<dbReference type="GO" id="GO:0003735">
    <property type="term" value="F:structural constituent of ribosome"/>
    <property type="evidence" value="ECO:0007669"/>
    <property type="project" value="InterPro"/>
</dbReference>
<dbReference type="GO" id="GO:0006412">
    <property type="term" value="P:translation"/>
    <property type="evidence" value="ECO:0007669"/>
    <property type="project" value="UniProtKB-UniRule"/>
</dbReference>
<dbReference type="Gene3D" id="3.40.1370.10">
    <property type="match status" value="1"/>
</dbReference>
<dbReference type="HAMAP" id="MF_01328_B">
    <property type="entry name" value="Ribosomal_uL4_B"/>
    <property type="match status" value="1"/>
</dbReference>
<dbReference type="InterPro" id="IPR002136">
    <property type="entry name" value="Ribosomal_uL4"/>
</dbReference>
<dbReference type="InterPro" id="IPR013005">
    <property type="entry name" value="Ribosomal_uL4-like"/>
</dbReference>
<dbReference type="InterPro" id="IPR023574">
    <property type="entry name" value="Ribosomal_uL4_dom_sf"/>
</dbReference>
<dbReference type="NCBIfam" id="TIGR03953">
    <property type="entry name" value="rplD_bact"/>
    <property type="match status" value="1"/>
</dbReference>
<dbReference type="PANTHER" id="PTHR10746">
    <property type="entry name" value="50S RIBOSOMAL PROTEIN L4"/>
    <property type="match status" value="1"/>
</dbReference>
<dbReference type="PANTHER" id="PTHR10746:SF6">
    <property type="entry name" value="LARGE RIBOSOMAL SUBUNIT PROTEIN UL4M"/>
    <property type="match status" value="1"/>
</dbReference>
<dbReference type="Pfam" id="PF00573">
    <property type="entry name" value="Ribosomal_L4"/>
    <property type="match status" value="1"/>
</dbReference>
<dbReference type="SUPFAM" id="SSF52166">
    <property type="entry name" value="Ribosomal protein L4"/>
    <property type="match status" value="1"/>
</dbReference>